<accession>P92506</accession>
<accession>F1LC27</accession>
<comment type="function">
    <text evidence="3 4 7 8">Membrane-bound large subunit (CybL) of the mitochondrial electron transport chain complex II, which together with the membrane-bound small subunit (CybS), anchor the catalytic subunits to the inner mitochondria membrane (PubMed:10743611, PubMed:12742584, PubMed:2843227, PubMed:8435436). During the free-living egg-larvae stages, which occur in an aerobic environment, complex II acts as a succinate dehydrogenase by transferring electrons from succinate to ubiquinone (PubMed:10743611, PubMed:12742584, PubMed:8435436). During the parasitic larvae and adult stages, which occur in an anaerobic environment, complex II acts as a fumarate reductase by transferring electrons from rhodoquinol to fumarate (PubMed:10743611, PubMed:12742584, PubMed:8435436).</text>
</comment>
<comment type="cofactor">
    <cofactor evidence="1">
        <name>heme b</name>
        <dbReference type="ChEBI" id="CHEBI:60344"/>
    </cofactor>
    <text evidence="5 6">The heme is bound between the two transmembrane subunits CybS and CybL.</text>
</comment>
<comment type="pathway">
    <text evidence="4">Carbohydrate metabolism; tricarboxylic acid cycle; fumarate from succinate (eukaryal route): step 1/1.</text>
</comment>
<comment type="subunit">
    <text evidence="3 4 5 6 7 8">Component of the mitochondrial electron transport chain complex II composed of four subunits: a flavoprotein (Fp), an iron-sulfur protein (Ip), and a large cytochrome b (CybL) subunit and a small cytochrome b (CybS) subunit (PubMed:10743611, PubMed:12742584, PubMed:22577165, PubMed:26198225, PubMed:2843227, PubMed:8435436). There are 2 developmental stage-specific forms of complex II which have the Ip and CybL subunits in common (PubMed:10743611, PubMed:12742584). Complex II from the free-living larvae (aerobic environment) acts as a succinate dehydrogenase and is composed of the common subunit Ip and CybL and the stage specific subunits FpL and CybSL (PubMed:12742584). Complex II from parasitic larvae and adults (anaerobic environment) acts as a fumarate reductase and is composed of the common subunit Ip and CybL and the stage specific subunits FpA and CybSA (PubMed:12742584).</text>
</comment>
<comment type="subcellular location">
    <subcellularLocation>
        <location evidence="3 4 5 6 7 8">Mitochondrion inner membrane</location>
        <topology evidence="5 6">Multi-pass membrane protein</topology>
    </subcellularLocation>
</comment>
<comment type="tissue specificity">
    <text evidence="3 4 5 6 7 8">Expressed in adult muscles (at protein level).</text>
</comment>
<comment type="developmental stage">
    <text evidence="3 4 7 8">Expressed in L3 larvae (at protein level).</text>
</comment>
<comment type="similarity">
    <text evidence="13">Belongs to the cytochrome b558 family.</text>
</comment>
<comment type="sequence caution" evidence="11">
    <conflict type="erroneous initiation">
        <sequence resource="EMBL-CDS" id="ADY47681"/>
    </conflict>
    <text>Extended N-terminus.</text>
</comment>
<protein>
    <recommendedName>
        <fullName evidence="10">Succinate dehydrogenase [ubiquinone] cytochrome b large subunit, mitochondrial</fullName>
        <shortName evidence="10">CybL</shortName>
    </recommendedName>
    <alternativeName>
        <fullName evidence="10">Succinate dehydrogenase cytochrome b558 large subunit, mitochondrial</fullName>
    </alternativeName>
</protein>
<organism evidence="15">
    <name type="scientific">Ascaris suum</name>
    <name type="common">Pig roundworm</name>
    <name type="synonym">Ascaris lumbricoides</name>
    <dbReference type="NCBI Taxonomy" id="6253"/>
    <lineage>
        <taxon>Eukaryota</taxon>
        <taxon>Metazoa</taxon>
        <taxon>Ecdysozoa</taxon>
        <taxon>Nematoda</taxon>
        <taxon>Chromadorea</taxon>
        <taxon>Rhabditida</taxon>
        <taxon>Spirurina</taxon>
        <taxon>Ascaridomorpha</taxon>
        <taxon>Ascaridoidea</taxon>
        <taxon>Ascarididae</taxon>
        <taxon>Ascaris</taxon>
    </lineage>
</organism>
<gene>
    <name evidence="9" type="primary">SDHC</name>
</gene>
<sequence>MSLLPYNATLCRVLRHNVKFIRSVQTSAARVSAEKTPIQVWGWDYLMRQRALKRPIAPHLTIYKPQMTWMVSGLHRVTGCAMAGTLLIGGVGFSVLPLDFTTFVEFIRGLGIPWVILDTFKFIIAFPIAFHTLNGIRFIGFDMAKGTDIPSIYRGAYLVLGLAALISLAVVVYPRWERHKKATLPTNH</sequence>
<keyword id="KW-0002">3D-structure</keyword>
<keyword id="KW-0903">Direct protein sequencing</keyword>
<keyword id="KW-0349">Heme</keyword>
<keyword id="KW-0408">Iron</keyword>
<keyword id="KW-0472">Membrane</keyword>
<keyword id="KW-0479">Metal-binding</keyword>
<keyword id="KW-0496">Mitochondrion</keyword>
<keyword id="KW-0999">Mitochondrion inner membrane</keyword>
<keyword id="KW-0809">Transit peptide</keyword>
<keyword id="KW-0812">Transmembrane</keyword>
<keyword id="KW-1133">Transmembrane helix</keyword>
<dbReference type="EMBL" id="D78157">
    <property type="protein sequence ID" value="BAA11232.2"/>
    <property type="molecule type" value="mRNA"/>
</dbReference>
<dbReference type="EMBL" id="JI177043">
    <property type="protein sequence ID" value="ADY47681.1"/>
    <property type="status" value="ALT_INIT"/>
    <property type="molecule type" value="mRNA"/>
</dbReference>
<dbReference type="PDB" id="3VR8">
    <property type="method" value="X-ray"/>
    <property type="resolution" value="2.81 A"/>
    <property type="chains" value="C/G=1-188"/>
</dbReference>
<dbReference type="PDB" id="3VR9">
    <property type="method" value="X-ray"/>
    <property type="resolution" value="3.01 A"/>
    <property type="chains" value="C/G=1-188"/>
</dbReference>
<dbReference type="PDB" id="3VRA">
    <property type="method" value="X-ray"/>
    <property type="resolution" value="3.44 A"/>
    <property type="chains" value="C/G=1-188"/>
</dbReference>
<dbReference type="PDB" id="3VRB">
    <property type="method" value="X-ray"/>
    <property type="resolution" value="2.91 A"/>
    <property type="chains" value="C/G=1-188"/>
</dbReference>
<dbReference type="PDB" id="4YSX">
    <property type="method" value="X-ray"/>
    <property type="resolution" value="2.25 A"/>
    <property type="chains" value="C/G=1-188"/>
</dbReference>
<dbReference type="PDB" id="4YSY">
    <property type="method" value="X-ray"/>
    <property type="resolution" value="3.10 A"/>
    <property type="chains" value="C/G=1-188"/>
</dbReference>
<dbReference type="PDB" id="4YSZ">
    <property type="method" value="X-ray"/>
    <property type="resolution" value="3.30 A"/>
    <property type="chains" value="C/G=1-188"/>
</dbReference>
<dbReference type="PDB" id="4YT0">
    <property type="method" value="X-ray"/>
    <property type="resolution" value="3.66 A"/>
    <property type="chains" value="C/G=1-188"/>
</dbReference>
<dbReference type="PDB" id="4YTM">
    <property type="method" value="X-ray"/>
    <property type="resolution" value="3.40 A"/>
    <property type="chains" value="C/G=1-188"/>
</dbReference>
<dbReference type="PDB" id="4YTN">
    <property type="method" value="X-ray"/>
    <property type="resolution" value="3.00 A"/>
    <property type="chains" value="C/G=1-188"/>
</dbReference>
<dbReference type="PDB" id="5C2T">
    <property type="method" value="X-ray"/>
    <property type="resolution" value="2.75 A"/>
    <property type="chains" value="C/G=1-188"/>
</dbReference>
<dbReference type="PDB" id="5C3J">
    <property type="method" value="X-ray"/>
    <property type="resolution" value="2.80 A"/>
    <property type="chains" value="C/G=1-188"/>
</dbReference>
<dbReference type="PDBsum" id="3VR8"/>
<dbReference type="PDBsum" id="3VR9"/>
<dbReference type="PDBsum" id="3VRA"/>
<dbReference type="PDBsum" id="3VRB"/>
<dbReference type="PDBsum" id="4YSX"/>
<dbReference type="PDBsum" id="4YSY"/>
<dbReference type="PDBsum" id="4YSZ"/>
<dbReference type="PDBsum" id="4YT0"/>
<dbReference type="PDBsum" id="4YTM"/>
<dbReference type="PDBsum" id="4YTN"/>
<dbReference type="PDBsum" id="5C2T"/>
<dbReference type="PDBsum" id="5C3J"/>
<dbReference type="SMR" id="P92506"/>
<dbReference type="BioCyc" id="MetaCyc:MONOMER-18287"/>
<dbReference type="UniPathway" id="UPA00223">
    <property type="reaction ID" value="UER01006"/>
</dbReference>
<dbReference type="EvolutionaryTrace" id="P92506"/>
<dbReference type="GO" id="GO:0005743">
    <property type="term" value="C:mitochondrial inner membrane"/>
    <property type="evidence" value="ECO:0007669"/>
    <property type="project" value="UniProtKB-SubCell"/>
</dbReference>
<dbReference type="GO" id="GO:0031966">
    <property type="term" value="C:mitochondrial membrane"/>
    <property type="evidence" value="ECO:0000314"/>
    <property type="project" value="UniProtKB"/>
</dbReference>
<dbReference type="GO" id="GO:0045273">
    <property type="term" value="C:respiratory chain complex II (succinate dehydrogenase)"/>
    <property type="evidence" value="ECO:0000314"/>
    <property type="project" value="UniProtKB"/>
</dbReference>
<dbReference type="GO" id="GO:0009055">
    <property type="term" value="F:electron transfer activity"/>
    <property type="evidence" value="ECO:0007669"/>
    <property type="project" value="InterPro"/>
</dbReference>
<dbReference type="GO" id="GO:0020037">
    <property type="term" value="F:heme binding"/>
    <property type="evidence" value="ECO:0000314"/>
    <property type="project" value="UniProtKB"/>
</dbReference>
<dbReference type="GO" id="GO:0046872">
    <property type="term" value="F:metal ion binding"/>
    <property type="evidence" value="ECO:0007669"/>
    <property type="project" value="UniProtKB-KW"/>
</dbReference>
<dbReference type="GO" id="GO:0006121">
    <property type="term" value="P:mitochondrial electron transport, succinate to ubiquinone"/>
    <property type="evidence" value="ECO:0000305"/>
    <property type="project" value="UniProtKB"/>
</dbReference>
<dbReference type="GO" id="GO:0006099">
    <property type="term" value="P:tricarboxylic acid cycle"/>
    <property type="evidence" value="ECO:0007669"/>
    <property type="project" value="UniProtKB-UniPathway"/>
</dbReference>
<dbReference type="CDD" id="cd03499">
    <property type="entry name" value="SQR_TypeC_SdhC"/>
    <property type="match status" value="1"/>
</dbReference>
<dbReference type="FunFam" id="1.20.1300.10:FF:000011">
    <property type="entry name" value="Succinate dehydrogenase cytochrome b560 subunit"/>
    <property type="match status" value="1"/>
</dbReference>
<dbReference type="Gene3D" id="1.20.1300.10">
    <property type="entry name" value="Fumarate reductase/succinate dehydrogenase, transmembrane subunit"/>
    <property type="match status" value="1"/>
</dbReference>
<dbReference type="InterPro" id="IPR034804">
    <property type="entry name" value="SQR/QFR_C/D"/>
</dbReference>
<dbReference type="InterPro" id="IPR018495">
    <property type="entry name" value="Succ_DH_cyt_bsu_CS"/>
</dbReference>
<dbReference type="InterPro" id="IPR014314">
    <property type="entry name" value="Succ_DH_cytb556"/>
</dbReference>
<dbReference type="InterPro" id="IPR000701">
    <property type="entry name" value="SuccDH_FuR_B_TM-su"/>
</dbReference>
<dbReference type="NCBIfam" id="TIGR02970">
    <property type="entry name" value="succ_dehyd_cytB"/>
    <property type="match status" value="1"/>
</dbReference>
<dbReference type="PANTHER" id="PTHR10978">
    <property type="entry name" value="SUCCINATE DEHYDROGENASE CYTOCHROME B560 SUBUNIT"/>
    <property type="match status" value="1"/>
</dbReference>
<dbReference type="PANTHER" id="PTHR10978:SF5">
    <property type="entry name" value="SUCCINATE DEHYDROGENASE CYTOCHROME B560 SUBUNIT, MITOCHONDRIAL"/>
    <property type="match status" value="1"/>
</dbReference>
<dbReference type="Pfam" id="PF01127">
    <property type="entry name" value="Sdh_cyt"/>
    <property type="match status" value="1"/>
</dbReference>
<dbReference type="SUPFAM" id="SSF81343">
    <property type="entry name" value="Fumarate reductase respiratory complex transmembrane subunits"/>
    <property type="match status" value="1"/>
</dbReference>
<dbReference type="PROSITE" id="PS01000">
    <property type="entry name" value="SDH_CYT_1"/>
    <property type="match status" value="1"/>
</dbReference>
<dbReference type="PROSITE" id="PS01001">
    <property type="entry name" value="SDH_CYT_2"/>
    <property type="match status" value="1"/>
</dbReference>
<name>DHSC_ASCSU</name>
<evidence type="ECO:0000250" key="1">
    <source>
        <dbReference type="UniProtKB" id="D0VWV4"/>
    </source>
</evidence>
<evidence type="ECO:0000255" key="2"/>
<evidence type="ECO:0000269" key="3">
    <source>
    </source>
</evidence>
<evidence type="ECO:0000269" key="4">
    <source>
    </source>
</evidence>
<evidence type="ECO:0000269" key="5">
    <source>
    </source>
</evidence>
<evidence type="ECO:0000269" key="6">
    <source>
    </source>
</evidence>
<evidence type="ECO:0000269" key="7">
    <source>
    </source>
</evidence>
<evidence type="ECO:0000269" key="8">
    <source>
    </source>
</evidence>
<evidence type="ECO:0000303" key="9">
    <source>
    </source>
</evidence>
<evidence type="ECO:0000303" key="10">
    <source>
    </source>
</evidence>
<evidence type="ECO:0000305" key="11"/>
<evidence type="ECO:0000305" key="12">
    <source>
    </source>
</evidence>
<evidence type="ECO:0000305" key="13">
    <source>
    </source>
</evidence>
<evidence type="ECO:0000312" key="14">
    <source>
        <dbReference type="EMBL" id="ADY47681.1"/>
    </source>
</evidence>
<evidence type="ECO:0000312" key="15">
    <source>
        <dbReference type="EMBL" id="BAA11232.2"/>
    </source>
</evidence>
<evidence type="ECO:0007744" key="16">
    <source>
        <dbReference type="PDB" id="3VR8"/>
    </source>
</evidence>
<evidence type="ECO:0007744" key="17">
    <source>
        <dbReference type="PDB" id="3VR9"/>
    </source>
</evidence>
<evidence type="ECO:0007744" key="18">
    <source>
        <dbReference type="PDB" id="3VRA"/>
    </source>
</evidence>
<evidence type="ECO:0007744" key="19">
    <source>
        <dbReference type="PDB" id="3VRB"/>
    </source>
</evidence>
<evidence type="ECO:0007744" key="20">
    <source>
        <dbReference type="PDB" id="4YSX"/>
    </source>
</evidence>
<evidence type="ECO:0007744" key="21">
    <source>
        <dbReference type="PDB" id="4YSY"/>
    </source>
</evidence>
<evidence type="ECO:0007744" key="22">
    <source>
        <dbReference type="PDB" id="4YSZ"/>
    </source>
</evidence>
<evidence type="ECO:0007744" key="23">
    <source>
        <dbReference type="PDB" id="4YT0"/>
    </source>
</evidence>
<evidence type="ECO:0007744" key="24">
    <source>
        <dbReference type="PDB" id="4YTM"/>
    </source>
</evidence>
<evidence type="ECO:0007744" key="25">
    <source>
        <dbReference type="PDB" id="4YTN"/>
    </source>
</evidence>
<evidence type="ECO:0007744" key="26">
    <source>
        <dbReference type="PDB" id="5C2T"/>
    </source>
</evidence>
<evidence type="ECO:0007744" key="27">
    <source>
        <dbReference type="PDB" id="5C3J"/>
    </source>
</evidence>
<evidence type="ECO:0007829" key="28">
    <source>
        <dbReference type="PDB" id="3VR8"/>
    </source>
</evidence>
<evidence type="ECO:0007829" key="29">
    <source>
        <dbReference type="PDB" id="3VR9"/>
    </source>
</evidence>
<evidence type="ECO:0007829" key="30">
    <source>
        <dbReference type="PDB" id="4YSX"/>
    </source>
</evidence>
<proteinExistence type="evidence at protein level"/>
<reference evidence="15" key="1">
    <citation type="journal article" date="1997" name="Int. J. Parasitol.">
        <title>Cytochromes in the respiratory chain of helminth mitochondria.</title>
        <authorList>
            <person name="Kita K."/>
            <person name="Hirawake H."/>
            <person name="Takamiya S."/>
        </authorList>
    </citation>
    <scope>NUCLEOTIDE SEQUENCE [MRNA]</scope>
</reference>
<reference evidence="14" key="2">
    <citation type="journal article" date="2011" name="Genome Res.">
        <title>Deep small RNA sequencing from the nematode Ascaris reveals conservation, functional diversification, and novel developmental profiles.</title>
        <authorList>
            <person name="Wang J."/>
            <person name="Czech B."/>
            <person name="Crunk A."/>
            <person name="Wallace A."/>
            <person name="Mitreva M."/>
            <person name="Hannon G.J."/>
            <person name="Davis R.E."/>
        </authorList>
    </citation>
    <scope>NUCLEOTIDE SEQUENCE [LARGE SCALE MRNA]</scope>
</reference>
<reference evidence="11" key="3">
    <citation type="journal article" date="2003" name="Mol. Biochem. Parasitol.">
        <title>Isolation and characterization of the stage-specific cytochrome b small subunit (CybS) of Ascaris suum complex II from the aerobic respiratory chain of larval mitochondria.</title>
        <authorList>
            <person name="Amino H."/>
            <person name="Osanai A."/>
            <person name="Miyadera H."/>
            <person name="Shinjyo N."/>
            <person name="Tomitsuka E."/>
            <person name="Taka H."/>
            <person name="Mineki R."/>
            <person name="Murayama K."/>
            <person name="Takamiya S."/>
            <person name="Aoki T."/>
            <person name="Miyoshi H."/>
            <person name="Sakamoto K."/>
            <person name="Kojima S."/>
            <person name="Kita K."/>
        </authorList>
    </citation>
    <scope>PROTEIN SEQUENCE OF 1-30; 36-48; 54-67; 138-145 AND 182-188</scope>
    <scope>FUNCTION</scope>
    <scope>PATHWAY</scope>
    <scope>IDENTIFICATION IN THE MITOCHONDRIAL RESPIRATORY CHAIN COMPLEX</scope>
    <scope>SUBCELLULAR LOCATION</scope>
    <scope>IDENTIFICATION BY MASS SPECTROMETRY</scope>
    <scope>TISSUE SPECIFICITY</scope>
    <scope>DEVELOPMENTAL STAGE</scope>
</reference>
<reference evidence="11" key="4">
    <citation type="journal article" date="1988" name="Biochim. Biophys. Acta">
        <title>Electron-transfer complexes of Ascaris suum muscle mitochondria. III. Composition and fumarate reductase activity of complex II.</title>
        <authorList>
            <person name="Kita K."/>
            <person name="Takamiya S."/>
            <person name="Furushima R."/>
            <person name="Ma Y.C."/>
            <person name="Suzuki H."/>
            <person name="Ozawa T."/>
            <person name="Oya H."/>
        </authorList>
    </citation>
    <scope>FUNCTION</scope>
    <scope>IDENTIFICATION IN THE MITOCHONDRIAL RESPIRATORY CHAIN COMPLEX II</scope>
    <scope>SUBCELLULAR LOCATION</scope>
    <scope>TISSUE SPECIFICITY</scope>
    <scope>DEVELOPMENTAL STAGE</scope>
</reference>
<reference evidence="11" key="5">
    <citation type="journal article" date="1993" name="Biochim. Biophys. Acta">
        <title>Developmental changes in the respiratory chain of Ascaris mitochondria.</title>
        <authorList>
            <person name="Takamiya S."/>
            <person name="Kita K."/>
            <person name="Wang H."/>
            <person name="Weinstein P.P."/>
            <person name="Hiraishi A."/>
            <person name="Oya H."/>
            <person name="Aoki T."/>
        </authorList>
    </citation>
    <scope>FUNCTION</scope>
    <scope>IDENTIFICATION IN THE MITOCHONDRIAL RESPIRATORY CHAIN COMPLEX II</scope>
    <scope>SUBCELLULAR LOCATION</scope>
    <scope>TISSUE SPECIFICITY</scope>
    <scope>DEVELOPMENTAL STAGE</scope>
</reference>
<reference evidence="11" key="6">
    <citation type="journal article" date="2000" name="Mol. Biochem. Parasitol.">
        <title>Stage-specific isoforms of Ascaris suum complex. II: The fumarate reductase of the parasitic adult and the succinate dehydrogenase of free-living larvae share a common iron-sulfur subunit.</title>
        <authorList>
            <person name="Amino H."/>
            <person name="Wang H."/>
            <person name="Hirawake H."/>
            <person name="Saruta F."/>
            <person name="Mizuchi D."/>
            <person name="Mineki R."/>
            <person name="Shindo N."/>
            <person name="Murayama K."/>
            <person name="Takamiya S."/>
            <person name="Aoki T."/>
            <person name="Kojima S."/>
            <person name="Kita K."/>
        </authorList>
    </citation>
    <scope>FUNCTION</scope>
    <scope>IDENTIFICATION IN THE MITOCHONDRIAL RESPIRATORY CHAIN COMPLEX II</scope>
    <scope>SUBCELLULAR LOCATION</scope>
    <scope>TISSUE SPECIFICITY</scope>
    <scope>DEVELOPMENTAL STAGE</scope>
</reference>
<reference evidence="16 17 18 19" key="7">
    <citation type="journal article" date="2012" name="J. Biochem.">
        <title>Crystal structure of mitochondrial quinol-fumarate reductase from the parasitic nematode Ascaris suum.</title>
        <authorList>
            <person name="Shimizu H."/>
            <person name="Osanai A."/>
            <person name="Sakamoto K."/>
            <person name="Inaoka D.K."/>
            <person name="Shiba T."/>
            <person name="Harada S."/>
            <person name="Kita K."/>
        </authorList>
    </citation>
    <scope>X-RAY CRYSTALLOGRAPHY (2.81 ANGSTROMS) IN COMPLEX WITH HEME; RHODOQUINONE ANALOG; FP; CYBL AND IP</scope>
    <scope>COFACTOR</scope>
    <scope>IDENTIFICATION IN THE MITOCHONDRIAL RESPIRATORY CHAIN COMPLEX II</scope>
    <scope>SUBCELLULAR LOCATION</scope>
    <scope>TISSUE SPECIFICITY</scope>
    <scope>TOPOLOGY</scope>
</reference>
<reference evidence="20 21 22 23 24 25 26 27" key="8">
    <citation type="journal article" date="2015" name="Int. J. Mol. Sci.">
        <title>Structural Insights into the Molecular Design of Flutolanil Derivatives Targeted for Fumarate Respiration of Parasite Mitochondria.</title>
        <authorList>
            <person name="Inaoka D.K."/>
            <person name="Shiba T."/>
            <person name="Sato D."/>
            <person name="Balogun E.O."/>
            <person name="Sasaki T."/>
            <person name="Nagahama M."/>
            <person name="Oda M."/>
            <person name="Matsuoka S."/>
            <person name="Ohmori J."/>
            <person name="Honma T."/>
            <person name="Inoue M."/>
            <person name="Kita K."/>
            <person name="Harada S."/>
        </authorList>
    </citation>
    <scope>X-RAY CRYSTALLOGRAPHY (2.25 ANGSTROMS) OF 5-192 IN COMPLEX WITH HEME; FP; CYBL; IP AND INHIBITOR</scope>
    <scope>COFACTOR</scope>
    <scope>IDENTIFICATION IN THE MITOCHONDRIAL RESPIRATORY CHAIN COMPLEX II</scope>
    <scope>SUBCELLULAR LOCATION</scope>
    <scope>TISSUE SPECIFICITY</scope>
</reference>
<feature type="transit peptide" description="Mitochondrion" evidence="2">
    <location>
        <begin position="1"/>
        <end position="31"/>
    </location>
</feature>
<feature type="chain" id="PRO_0000458188" description="Succinate dehydrogenase [ubiquinone] cytochrome b large subunit, mitochondrial" evidence="2">
    <location>
        <begin position="32"/>
        <end position="188"/>
    </location>
</feature>
<feature type="topological domain" description="Mitochondrial matrix" evidence="12">
    <location>
        <begin position="32"/>
        <end position="69"/>
    </location>
</feature>
<feature type="transmembrane region" description="Helical" evidence="12">
    <location>
        <begin position="70"/>
        <end position="95"/>
    </location>
</feature>
<feature type="topological domain" description="Mitochondrial intermembrane" evidence="12">
    <location>
        <begin position="96"/>
        <end position="113"/>
    </location>
</feature>
<feature type="transmembrane region" description="Helical" evidence="12">
    <location>
        <begin position="114"/>
        <end position="140"/>
    </location>
</feature>
<feature type="topological domain" description="Mitochondrial matrix" evidence="12">
    <location>
        <begin position="141"/>
        <end position="153"/>
    </location>
</feature>
<feature type="transmembrane region" description="Helical" evidence="12">
    <location>
        <begin position="154"/>
        <end position="176"/>
    </location>
</feature>
<feature type="topological domain" description="Mitochondrial intermembrane" evidence="12">
    <location>
        <begin position="177"/>
        <end position="188"/>
    </location>
</feature>
<feature type="binding site" evidence="12 16">
    <location>
        <position position="72"/>
    </location>
    <ligand>
        <name>a rhodoquinol</name>
        <dbReference type="ChEBI" id="CHEBI:194433"/>
        <note>ligand shared with IP and small subunit</note>
    </ligand>
</feature>
<feature type="binding site" evidence="12 16">
    <location>
        <position position="72"/>
    </location>
    <ligand>
        <name>a ubiquinone</name>
        <dbReference type="ChEBI" id="CHEBI:16389"/>
        <note>ligand shared with IP and small subunit</note>
    </ligand>
</feature>
<feature type="binding site" evidence="12 16">
    <location>
        <position position="76"/>
    </location>
    <ligand>
        <name>a rhodoquinol</name>
        <dbReference type="ChEBI" id="CHEBI:194433"/>
        <note>ligand shared with IP and small subunit</note>
    </ligand>
</feature>
<feature type="binding site" evidence="12 16">
    <location>
        <position position="76"/>
    </location>
    <ligand>
        <name>a ubiquinone</name>
        <dbReference type="ChEBI" id="CHEBI:16389"/>
        <note>ligand shared with IP and small subunit</note>
    </ligand>
</feature>
<feature type="binding site" description="axial binding residue" evidence="5 6 16 17 18 19 20 21 22 23 24 25 26 27">
    <location>
        <position position="131"/>
    </location>
    <ligand>
        <name>heme b</name>
        <dbReference type="ChEBI" id="CHEBI:60344"/>
        <note>ligand shared with small subunit</note>
    </ligand>
    <ligandPart>
        <name>Fe</name>
        <dbReference type="ChEBI" id="CHEBI:18248"/>
    </ligandPart>
</feature>
<feature type="helix" evidence="30">
    <location>
        <begin position="37"/>
        <end position="51"/>
    </location>
</feature>
<feature type="turn" evidence="30">
    <location>
        <begin position="60"/>
        <end position="62"/>
    </location>
</feature>
<feature type="helix" evidence="30">
    <location>
        <begin position="67"/>
        <end position="95"/>
    </location>
</feature>
<feature type="strand" evidence="29">
    <location>
        <begin position="96"/>
        <end position="98"/>
    </location>
</feature>
<feature type="helix" evidence="30">
    <location>
        <begin position="100"/>
        <end position="109"/>
    </location>
</feature>
<feature type="helix" evidence="30">
    <location>
        <begin position="114"/>
        <end position="142"/>
    </location>
</feature>
<feature type="turn" evidence="28">
    <location>
        <begin position="143"/>
        <end position="146"/>
    </location>
</feature>
<feature type="helix" evidence="30">
    <location>
        <begin position="149"/>
        <end position="183"/>
    </location>
</feature>